<evidence type="ECO:0000255" key="1">
    <source>
        <dbReference type="HAMAP-Rule" id="MF_01151"/>
    </source>
</evidence>
<gene>
    <name evidence="1" type="primary">grpE</name>
    <name type="ordered locus">Tpet_0077</name>
</gene>
<protein>
    <recommendedName>
        <fullName evidence="1">Protein GrpE</fullName>
    </recommendedName>
    <alternativeName>
        <fullName evidence="1">HSP-70 cofactor</fullName>
    </alternativeName>
</protein>
<name>GRPE_THEP1</name>
<feature type="chain" id="PRO_1000137637" description="Protein GrpE">
    <location>
        <begin position="1"/>
        <end position="172"/>
    </location>
</feature>
<organism>
    <name type="scientific">Thermotoga petrophila (strain ATCC BAA-488 / DSM 13995 / JCM 10881 / RKU-1)</name>
    <dbReference type="NCBI Taxonomy" id="390874"/>
    <lineage>
        <taxon>Bacteria</taxon>
        <taxon>Thermotogati</taxon>
        <taxon>Thermotogota</taxon>
        <taxon>Thermotogae</taxon>
        <taxon>Thermotogales</taxon>
        <taxon>Thermotogaceae</taxon>
        <taxon>Thermotoga</taxon>
    </lineage>
</organism>
<sequence length="172" mass="20413">MSEKDKKELTQECEELKEKYKELEEYAKRLKAEYENYREEVAREKRELIKNANEYLILKLIPVLDDFERALNQGEKRDAFYEGVKMIYKKLLNVLEKEGLTKIHVGEKFDPFEHEAVERVETEDVEEYTVLEVVESGYKFHGKVLKPAKVKVAVKPRKKEAEKVEKPSDEKE</sequence>
<reference key="1">
    <citation type="submission" date="2007-05" db="EMBL/GenBank/DDBJ databases">
        <title>Complete sequence of Thermotoga petrophila RKU-1.</title>
        <authorList>
            <consortium name="US DOE Joint Genome Institute"/>
            <person name="Copeland A."/>
            <person name="Lucas S."/>
            <person name="Lapidus A."/>
            <person name="Barry K."/>
            <person name="Glavina del Rio T."/>
            <person name="Dalin E."/>
            <person name="Tice H."/>
            <person name="Pitluck S."/>
            <person name="Sims D."/>
            <person name="Brettin T."/>
            <person name="Bruce D."/>
            <person name="Detter J.C."/>
            <person name="Han C."/>
            <person name="Tapia R."/>
            <person name="Schmutz J."/>
            <person name="Larimer F."/>
            <person name="Land M."/>
            <person name="Hauser L."/>
            <person name="Kyrpides N."/>
            <person name="Mikhailova N."/>
            <person name="Nelson K."/>
            <person name="Gogarten J.P."/>
            <person name="Noll K."/>
            <person name="Richardson P."/>
        </authorList>
    </citation>
    <scope>NUCLEOTIDE SEQUENCE [LARGE SCALE GENOMIC DNA]</scope>
    <source>
        <strain>ATCC BAA-488 / DSM 13995 / JCM 10881 / RKU-1</strain>
    </source>
</reference>
<keyword id="KW-0143">Chaperone</keyword>
<keyword id="KW-0963">Cytoplasm</keyword>
<keyword id="KW-0346">Stress response</keyword>
<accession>A5IIT3</accession>
<comment type="function">
    <text evidence="1">Participates actively in the response to hyperosmotic and heat shock by preventing the aggregation of stress-denatured proteins, in association with DnaK and GrpE. It is the nucleotide exchange factor for DnaK and may function as a thermosensor. Unfolded proteins bind initially to DnaJ; upon interaction with the DnaJ-bound protein, DnaK hydrolyzes its bound ATP, resulting in the formation of a stable complex. GrpE releases ADP from DnaK; ATP binding to DnaK triggers the release of the substrate protein, thus completing the reaction cycle. Several rounds of ATP-dependent interactions between DnaJ, DnaK and GrpE are required for fully efficient folding.</text>
</comment>
<comment type="subunit">
    <text evidence="1">Homodimer.</text>
</comment>
<comment type="subcellular location">
    <subcellularLocation>
        <location evidence="1">Cytoplasm</location>
    </subcellularLocation>
</comment>
<comment type="similarity">
    <text evidence="1">Belongs to the GrpE family.</text>
</comment>
<proteinExistence type="inferred from homology"/>
<dbReference type="EMBL" id="CP000702">
    <property type="protein sequence ID" value="ABQ46106.1"/>
    <property type="molecule type" value="Genomic_DNA"/>
</dbReference>
<dbReference type="RefSeq" id="WP_011942780.1">
    <property type="nucleotide sequence ID" value="NC_009486.1"/>
</dbReference>
<dbReference type="SMR" id="A5IIT3"/>
<dbReference type="STRING" id="390874.Tpet_0077"/>
<dbReference type="KEGG" id="tpt:Tpet_0077"/>
<dbReference type="eggNOG" id="COG0576">
    <property type="taxonomic scope" value="Bacteria"/>
</dbReference>
<dbReference type="HOGENOM" id="CLU_057217_5_2_0"/>
<dbReference type="Proteomes" id="UP000006558">
    <property type="component" value="Chromosome"/>
</dbReference>
<dbReference type="GO" id="GO:0005737">
    <property type="term" value="C:cytoplasm"/>
    <property type="evidence" value="ECO:0007669"/>
    <property type="project" value="UniProtKB-SubCell"/>
</dbReference>
<dbReference type="GO" id="GO:0000774">
    <property type="term" value="F:adenyl-nucleotide exchange factor activity"/>
    <property type="evidence" value="ECO:0007669"/>
    <property type="project" value="InterPro"/>
</dbReference>
<dbReference type="GO" id="GO:0042803">
    <property type="term" value="F:protein homodimerization activity"/>
    <property type="evidence" value="ECO:0007669"/>
    <property type="project" value="InterPro"/>
</dbReference>
<dbReference type="GO" id="GO:0051087">
    <property type="term" value="F:protein-folding chaperone binding"/>
    <property type="evidence" value="ECO:0007669"/>
    <property type="project" value="InterPro"/>
</dbReference>
<dbReference type="GO" id="GO:0051082">
    <property type="term" value="F:unfolded protein binding"/>
    <property type="evidence" value="ECO:0007669"/>
    <property type="project" value="TreeGrafter"/>
</dbReference>
<dbReference type="GO" id="GO:0006457">
    <property type="term" value="P:protein folding"/>
    <property type="evidence" value="ECO:0007669"/>
    <property type="project" value="InterPro"/>
</dbReference>
<dbReference type="CDD" id="cd00446">
    <property type="entry name" value="GrpE"/>
    <property type="match status" value="1"/>
</dbReference>
<dbReference type="FunFam" id="2.30.22.10:FF:000001">
    <property type="entry name" value="Protein GrpE"/>
    <property type="match status" value="1"/>
</dbReference>
<dbReference type="Gene3D" id="3.90.20.20">
    <property type="match status" value="1"/>
</dbReference>
<dbReference type="Gene3D" id="2.30.22.10">
    <property type="entry name" value="Head domain of nucleotide exchange factor GrpE"/>
    <property type="match status" value="1"/>
</dbReference>
<dbReference type="HAMAP" id="MF_01151">
    <property type="entry name" value="GrpE"/>
    <property type="match status" value="1"/>
</dbReference>
<dbReference type="InterPro" id="IPR000740">
    <property type="entry name" value="GrpE"/>
</dbReference>
<dbReference type="InterPro" id="IPR013805">
    <property type="entry name" value="GrpE_coiled_coil"/>
</dbReference>
<dbReference type="InterPro" id="IPR009012">
    <property type="entry name" value="GrpE_head"/>
</dbReference>
<dbReference type="PANTHER" id="PTHR21237">
    <property type="entry name" value="GRPE PROTEIN"/>
    <property type="match status" value="1"/>
</dbReference>
<dbReference type="PANTHER" id="PTHR21237:SF23">
    <property type="entry name" value="GRPE PROTEIN HOMOLOG, MITOCHONDRIAL"/>
    <property type="match status" value="1"/>
</dbReference>
<dbReference type="Pfam" id="PF01025">
    <property type="entry name" value="GrpE"/>
    <property type="match status" value="1"/>
</dbReference>
<dbReference type="PRINTS" id="PR00773">
    <property type="entry name" value="GRPEPROTEIN"/>
</dbReference>
<dbReference type="SUPFAM" id="SSF58014">
    <property type="entry name" value="Coiled-coil domain of nucleotide exchange factor GrpE"/>
    <property type="match status" value="1"/>
</dbReference>
<dbReference type="SUPFAM" id="SSF51064">
    <property type="entry name" value="Head domain of nucleotide exchange factor GrpE"/>
    <property type="match status" value="1"/>
</dbReference>
<dbReference type="PROSITE" id="PS01071">
    <property type="entry name" value="GRPE"/>
    <property type="match status" value="1"/>
</dbReference>